<accession>Q8P2N7</accession>
<keyword id="KW-0963">Cytoplasm</keyword>
<keyword id="KW-0342">GTP-binding</keyword>
<keyword id="KW-0378">Hydrolase</keyword>
<keyword id="KW-0479">Metal-binding</keyword>
<keyword id="KW-0547">Nucleotide-binding</keyword>
<keyword id="KW-0690">Ribosome biogenesis</keyword>
<keyword id="KW-0694">RNA-binding</keyword>
<keyword id="KW-0699">rRNA-binding</keyword>
<keyword id="KW-0862">Zinc</keyword>
<organism>
    <name type="scientific">Streptococcus pyogenes serotype M18 (strain MGAS8232)</name>
    <dbReference type="NCBI Taxonomy" id="186103"/>
    <lineage>
        <taxon>Bacteria</taxon>
        <taxon>Bacillati</taxon>
        <taxon>Bacillota</taxon>
        <taxon>Bacilli</taxon>
        <taxon>Lactobacillales</taxon>
        <taxon>Streptococcaceae</taxon>
        <taxon>Streptococcus</taxon>
    </lineage>
</organism>
<evidence type="ECO:0000255" key="1">
    <source>
        <dbReference type="HAMAP-Rule" id="MF_01820"/>
    </source>
</evidence>
<evidence type="ECO:0000255" key="2">
    <source>
        <dbReference type="PROSITE-ProRule" id="PRU01058"/>
    </source>
</evidence>
<gene>
    <name evidence="1" type="primary">rsgA</name>
    <name type="ordered locus">spyM18_0247</name>
</gene>
<protein>
    <recommendedName>
        <fullName evidence="1">Small ribosomal subunit biogenesis GTPase RsgA</fullName>
        <ecNumber evidence="1">3.6.1.-</ecNumber>
    </recommendedName>
</protein>
<reference key="1">
    <citation type="journal article" date="2002" name="Proc. Natl. Acad. Sci. U.S.A.">
        <title>Genome sequence and comparative microarray analysis of serotype M18 group A Streptococcus strains associated with acute rheumatic fever outbreaks.</title>
        <authorList>
            <person name="Smoot J.C."/>
            <person name="Barbian K.D."/>
            <person name="Van Gompel J.J."/>
            <person name="Smoot L.M."/>
            <person name="Chaussee M.S."/>
            <person name="Sylva G.L."/>
            <person name="Sturdevant D.E."/>
            <person name="Ricklefs S.M."/>
            <person name="Porcella S.F."/>
            <person name="Parkins L.D."/>
            <person name="Beres S.B."/>
            <person name="Campbell D.S."/>
            <person name="Smith T.M."/>
            <person name="Zhang Q."/>
            <person name="Kapur V."/>
            <person name="Daly J.A."/>
            <person name="Veasy L.G."/>
            <person name="Musser J.M."/>
        </authorList>
    </citation>
    <scope>NUCLEOTIDE SEQUENCE [LARGE SCALE GENOMIC DNA]</scope>
    <source>
        <strain>MGAS8232</strain>
    </source>
</reference>
<name>RSGA_STRP8</name>
<feature type="chain" id="PRO_0000171533" description="Small ribosomal subunit biogenesis GTPase RsgA">
    <location>
        <begin position="1"/>
        <end position="290"/>
    </location>
</feature>
<feature type="domain" description="CP-type G" evidence="2">
    <location>
        <begin position="62"/>
        <end position="213"/>
    </location>
</feature>
<feature type="binding site" evidence="1">
    <location>
        <begin position="111"/>
        <end position="114"/>
    </location>
    <ligand>
        <name>GTP</name>
        <dbReference type="ChEBI" id="CHEBI:37565"/>
    </ligand>
</feature>
<feature type="binding site" evidence="1">
    <location>
        <begin position="156"/>
        <end position="164"/>
    </location>
    <ligand>
        <name>GTP</name>
        <dbReference type="ChEBI" id="CHEBI:37565"/>
    </ligand>
</feature>
<feature type="binding site" evidence="1">
    <location>
        <position position="237"/>
    </location>
    <ligand>
        <name>Zn(2+)</name>
        <dbReference type="ChEBI" id="CHEBI:29105"/>
    </ligand>
</feature>
<feature type="binding site" evidence="1">
    <location>
        <position position="242"/>
    </location>
    <ligand>
        <name>Zn(2+)</name>
        <dbReference type="ChEBI" id="CHEBI:29105"/>
    </ligand>
</feature>
<feature type="binding site" evidence="1">
    <location>
        <position position="244"/>
    </location>
    <ligand>
        <name>Zn(2+)</name>
        <dbReference type="ChEBI" id="CHEBI:29105"/>
    </ligand>
</feature>
<feature type="binding site" evidence="1">
    <location>
        <position position="250"/>
    </location>
    <ligand>
        <name>Zn(2+)</name>
        <dbReference type="ChEBI" id="CHEBI:29105"/>
    </ligand>
</feature>
<sequence length="290" mass="32850">MQGKIIKSLAGFYYVESEGQVYQTRARGNFRKRGETPYVGDIVDFSAEDNSEGYILAIHPRKNSLVRPPIVNIDQAVVIMSAKEPEFNSNLLDRFLILLEHKAIHPVVYISKMDLLDSPEEIKAIGRQYQAIGYNFVTSLEELLPLLADKITVFMGQTGVGKSTLLNRIAPELALETGEISDSLGRGRHTTRAVSFYNTHGGKIADTPGFSSLDYDIANAEDLNEAFPELRRLSHKCKFRSCTHTHEPKCAVKAALETGELWPVRYEHYLQFLSEIENRRETYKKVIKRK</sequence>
<proteinExistence type="inferred from homology"/>
<dbReference type="EC" id="3.6.1.-" evidence="1"/>
<dbReference type="EMBL" id="AE009949">
    <property type="protein sequence ID" value="AAL97030.1"/>
    <property type="molecule type" value="Genomic_DNA"/>
</dbReference>
<dbReference type="RefSeq" id="WP_011017322.1">
    <property type="nucleotide sequence ID" value="NC_003485.1"/>
</dbReference>
<dbReference type="SMR" id="Q8P2N7"/>
<dbReference type="KEGG" id="spm:spyM18_0247"/>
<dbReference type="HOGENOM" id="CLU_033617_2_1_9"/>
<dbReference type="GO" id="GO:0005737">
    <property type="term" value="C:cytoplasm"/>
    <property type="evidence" value="ECO:0007669"/>
    <property type="project" value="UniProtKB-SubCell"/>
</dbReference>
<dbReference type="GO" id="GO:0005525">
    <property type="term" value="F:GTP binding"/>
    <property type="evidence" value="ECO:0007669"/>
    <property type="project" value="UniProtKB-UniRule"/>
</dbReference>
<dbReference type="GO" id="GO:0003924">
    <property type="term" value="F:GTPase activity"/>
    <property type="evidence" value="ECO:0007669"/>
    <property type="project" value="UniProtKB-UniRule"/>
</dbReference>
<dbReference type="GO" id="GO:0046872">
    <property type="term" value="F:metal ion binding"/>
    <property type="evidence" value="ECO:0007669"/>
    <property type="project" value="UniProtKB-KW"/>
</dbReference>
<dbReference type="GO" id="GO:0019843">
    <property type="term" value="F:rRNA binding"/>
    <property type="evidence" value="ECO:0007669"/>
    <property type="project" value="UniProtKB-KW"/>
</dbReference>
<dbReference type="GO" id="GO:0042274">
    <property type="term" value="P:ribosomal small subunit biogenesis"/>
    <property type="evidence" value="ECO:0007669"/>
    <property type="project" value="UniProtKB-UniRule"/>
</dbReference>
<dbReference type="CDD" id="cd04466">
    <property type="entry name" value="S1_YloQ_GTPase"/>
    <property type="match status" value="1"/>
</dbReference>
<dbReference type="CDD" id="cd01854">
    <property type="entry name" value="YjeQ_EngC"/>
    <property type="match status" value="1"/>
</dbReference>
<dbReference type="Gene3D" id="2.40.50.140">
    <property type="entry name" value="Nucleic acid-binding proteins"/>
    <property type="match status" value="1"/>
</dbReference>
<dbReference type="Gene3D" id="3.40.50.300">
    <property type="entry name" value="P-loop containing nucleotide triphosphate hydrolases"/>
    <property type="match status" value="1"/>
</dbReference>
<dbReference type="Gene3D" id="1.10.40.50">
    <property type="entry name" value="Probable gtpase engc, domain 3"/>
    <property type="match status" value="1"/>
</dbReference>
<dbReference type="HAMAP" id="MF_01820">
    <property type="entry name" value="GTPase_RsgA"/>
    <property type="match status" value="1"/>
</dbReference>
<dbReference type="InterPro" id="IPR030378">
    <property type="entry name" value="G_CP_dom"/>
</dbReference>
<dbReference type="InterPro" id="IPR012340">
    <property type="entry name" value="NA-bd_OB-fold"/>
</dbReference>
<dbReference type="InterPro" id="IPR027417">
    <property type="entry name" value="P-loop_NTPase"/>
</dbReference>
<dbReference type="InterPro" id="IPR004881">
    <property type="entry name" value="Ribosome_biogen_GTPase_RsgA"/>
</dbReference>
<dbReference type="InterPro" id="IPR010914">
    <property type="entry name" value="RsgA_GTPase_dom"/>
</dbReference>
<dbReference type="InterPro" id="IPR031944">
    <property type="entry name" value="RsgA_N"/>
</dbReference>
<dbReference type="NCBIfam" id="TIGR00157">
    <property type="entry name" value="ribosome small subunit-dependent GTPase A"/>
    <property type="match status" value="1"/>
</dbReference>
<dbReference type="PANTHER" id="PTHR32120">
    <property type="entry name" value="SMALL RIBOSOMAL SUBUNIT BIOGENESIS GTPASE RSGA"/>
    <property type="match status" value="1"/>
</dbReference>
<dbReference type="PANTHER" id="PTHR32120:SF11">
    <property type="entry name" value="SMALL RIBOSOMAL SUBUNIT BIOGENESIS GTPASE RSGA 1, MITOCHONDRIAL-RELATED"/>
    <property type="match status" value="1"/>
</dbReference>
<dbReference type="Pfam" id="PF03193">
    <property type="entry name" value="RsgA_GTPase"/>
    <property type="match status" value="1"/>
</dbReference>
<dbReference type="Pfam" id="PF16745">
    <property type="entry name" value="RsgA_N"/>
    <property type="match status" value="1"/>
</dbReference>
<dbReference type="SUPFAM" id="SSF50249">
    <property type="entry name" value="Nucleic acid-binding proteins"/>
    <property type="match status" value="1"/>
</dbReference>
<dbReference type="SUPFAM" id="SSF52540">
    <property type="entry name" value="P-loop containing nucleoside triphosphate hydrolases"/>
    <property type="match status" value="1"/>
</dbReference>
<dbReference type="PROSITE" id="PS50936">
    <property type="entry name" value="ENGC_GTPASE"/>
    <property type="match status" value="1"/>
</dbReference>
<dbReference type="PROSITE" id="PS51721">
    <property type="entry name" value="G_CP"/>
    <property type="match status" value="1"/>
</dbReference>
<comment type="function">
    <text evidence="1">One of several proteins that assist in the late maturation steps of the functional core of the 30S ribosomal subunit. Helps release RbfA from mature subunits. May play a role in the assembly of ribosomal proteins into the subunit. Circularly permuted GTPase that catalyzes slow GTP hydrolysis, GTPase activity is stimulated by the 30S ribosomal subunit.</text>
</comment>
<comment type="cofactor">
    <cofactor evidence="1">
        <name>Zn(2+)</name>
        <dbReference type="ChEBI" id="CHEBI:29105"/>
    </cofactor>
    <text evidence="1">Binds 1 zinc ion per subunit.</text>
</comment>
<comment type="subunit">
    <text evidence="1">Monomer. Associates with 30S ribosomal subunit, binds 16S rRNA.</text>
</comment>
<comment type="subcellular location">
    <subcellularLocation>
        <location evidence="1">Cytoplasm</location>
    </subcellularLocation>
</comment>
<comment type="similarity">
    <text evidence="1">Belongs to the TRAFAC class YlqF/YawG GTPase family. RsgA subfamily.</text>
</comment>